<gene>
    <name evidence="1" type="primary">rnhA</name>
    <name type="ordered locus">PA1815</name>
</gene>
<dbReference type="EC" id="3.1.26.4" evidence="1"/>
<dbReference type="EMBL" id="AE004091">
    <property type="protein sequence ID" value="AAG05204.1"/>
    <property type="molecule type" value="Genomic_DNA"/>
</dbReference>
<dbReference type="PIR" id="A83418">
    <property type="entry name" value="A83418"/>
</dbReference>
<dbReference type="RefSeq" id="NP_250506.1">
    <property type="nucleotide sequence ID" value="NC_002516.2"/>
</dbReference>
<dbReference type="RefSeq" id="WP_003087954.1">
    <property type="nucleotide sequence ID" value="NZ_QZGE01000003.1"/>
</dbReference>
<dbReference type="SMR" id="Q9I2S9"/>
<dbReference type="FunCoup" id="Q9I2S9">
    <property type="interactions" value="291"/>
</dbReference>
<dbReference type="STRING" id="208964.PA1815"/>
<dbReference type="PaxDb" id="208964-PA1815"/>
<dbReference type="GeneID" id="878252"/>
<dbReference type="KEGG" id="pae:PA1815"/>
<dbReference type="PATRIC" id="fig|208964.12.peg.1885"/>
<dbReference type="PseudoCAP" id="PA1815"/>
<dbReference type="HOGENOM" id="CLU_030894_6_0_6"/>
<dbReference type="InParanoid" id="Q9I2S9"/>
<dbReference type="OrthoDB" id="7845843at2"/>
<dbReference type="PhylomeDB" id="Q9I2S9"/>
<dbReference type="BioCyc" id="PAER208964:G1FZ6-1853-MONOMER"/>
<dbReference type="Proteomes" id="UP000002438">
    <property type="component" value="Chromosome"/>
</dbReference>
<dbReference type="GO" id="GO:0005737">
    <property type="term" value="C:cytoplasm"/>
    <property type="evidence" value="ECO:0007669"/>
    <property type="project" value="UniProtKB-SubCell"/>
</dbReference>
<dbReference type="GO" id="GO:0000287">
    <property type="term" value="F:magnesium ion binding"/>
    <property type="evidence" value="ECO:0007669"/>
    <property type="project" value="UniProtKB-UniRule"/>
</dbReference>
<dbReference type="GO" id="GO:0003676">
    <property type="term" value="F:nucleic acid binding"/>
    <property type="evidence" value="ECO:0007669"/>
    <property type="project" value="InterPro"/>
</dbReference>
<dbReference type="GO" id="GO:0004523">
    <property type="term" value="F:RNA-DNA hybrid ribonuclease activity"/>
    <property type="evidence" value="ECO:0000318"/>
    <property type="project" value="GO_Central"/>
</dbReference>
<dbReference type="GO" id="GO:0043137">
    <property type="term" value="P:DNA replication, removal of RNA primer"/>
    <property type="evidence" value="ECO:0000318"/>
    <property type="project" value="GO_Central"/>
</dbReference>
<dbReference type="CDD" id="cd09278">
    <property type="entry name" value="RNase_HI_prokaryote_like"/>
    <property type="match status" value="1"/>
</dbReference>
<dbReference type="FunFam" id="3.30.420.10:FF:000119">
    <property type="entry name" value="Ribonuclease H"/>
    <property type="match status" value="1"/>
</dbReference>
<dbReference type="Gene3D" id="3.30.420.10">
    <property type="entry name" value="Ribonuclease H-like superfamily/Ribonuclease H"/>
    <property type="match status" value="1"/>
</dbReference>
<dbReference type="HAMAP" id="MF_00042">
    <property type="entry name" value="RNase_H"/>
    <property type="match status" value="1"/>
</dbReference>
<dbReference type="InterPro" id="IPR050092">
    <property type="entry name" value="RNase_H"/>
</dbReference>
<dbReference type="InterPro" id="IPR012337">
    <property type="entry name" value="RNaseH-like_sf"/>
</dbReference>
<dbReference type="InterPro" id="IPR002156">
    <property type="entry name" value="RNaseH_domain"/>
</dbReference>
<dbReference type="InterPro" id="IPR036397">
    <property type="entry name" value="RNaseH_sf"/>
</dbReference>
<dbReference type="InterPro" id="IPR022892">
    <property type="entry name" value="RNaseHI"/>
</dbReference>
<dbReference type="NCBIfam" id="NF001236">
    <property type="entry name" value="PRK00203.1"/>
    <property type="match status" value="1"/>
</dbReference>
<dbReference type="PANTHER" id="PTHR10642">
    <property type="entry name" value="RIBONUCLEASE H1"/>
    <property type="match status" value="1"/>
</dbReference>
<dbReference type="PANTHER" id="PTHR10642:SF26">
    <property type="entry name" value="RIBONUCLEASE H1"/>
    <property type="match status" value="1"/>
</dbReference>
<dbReference type="Pfam" id="PF00075">
    <property type="entry name" value="RNase_H"/>
    <property type="match status" value="1"/>
</dbReference>
<dbReference type="SUPFAM" id="SSF53098">
    <property type="entry name" value="Ribonuclease H-like"/>
    <property type="match status" value="1"/>
</dbReference>
<dbReference type="PROSITE" id="PS50879">
    <property type="entry name" value="RNASE_H_1"/>
    <property type="match status" value="1"/>
</dbReference>
<name>RNH_PSEAE</name>
<evidence type="ECO:0000255" key="1">
    <source>
        <dbReference type="HAMAP-Rule" id="MF_00042"/>
    </source>
</evidence>
<evidence type="ECO:0000255" key="2">
    <source>
        <dbReference type="PROSITE-ProRule" id="PRU00408"/>
    </source>
</evidence>
<evidence type="ECO:0000256" key="3">
    <source>
        <dbReference type="SAM" id="MobiDB-lite"/>
    </source>
</evidence>
<keyword id="KW-0963">Cytoplasm</keyword>
<keyword id="KW-0255">Endonuclease</keyword>
<keyword id="KW-0378">Hydrolase</keyword>
<keyword id="KW-0460">Magnesium</keyword>
<keyword id="KW-0479">Metal-binding</keyword>
<keyword id="KW-0540">Nuclease</keyword>
<keyword id="KW-1185">Reference proteome</keyword>
<accession>Q9I2S9</accession>
<feature type="chain" id="PRO_0000195389" description="Ribonuclease HI">
    <location>
        <begin position="1"/>
        <end position="148"/>
    </location>
</feature>
<feature type="domain" description="RNase H type-1" evidence="2">
    <location>
        <begin position="3"/>
        <end position="144"/>
    </location>
</feature>
<feature type="region of interest" description="Disordered" evidence="3">
    <location>
        <begin position="125"/>
        <end position="148"/>
    </location>
</feature>
<feature type="binding site" evidence="1">
    <location>
        <position position="12"/>
    </location>
    <ligand>
        <name>Mg(2+)</name>
        <dbReference type="ChEBI" id="CHEBI:18420"/>
        <label>1</label>
    </ligand>
</feature>
<feature type="binding site" evidence="1">
    <location>
        <position position="12"/>
    </location>
    <ligand>
        <name>Mg(2+)</name>
        <dbReference type="ChEBI" id="CHEBI:18420"/>
        <label>2</label>
    </ligand>
</feature>
<feature type="binding site" evidence="1">
    <location>
        <position position="50"/>
    </location>
    <ligand>
        <name>Mg(2+)</name>
        <dbReference type="ChEBI" id="CHEBI:18420"/>
        <label>1</label>
    </ligand>
</feature>
<feature type="binding site" evidence="1">
    <location>
        <position position="72"/>
    </location>
    <ligand>
        <name>Mg(2+)</name>
        <dbReference type="ChEBI" id="CHEBI:18420"/>
        <label>1</label>
    </ligand>
</feature>
<feature type="binding site" evidence="1">
    <location>
        <position position="136"/>
    </location>
    <ligand>
        <name>Mg(2+)</name>
        <dbReference type="ChEBI" id="CHEBI:18420"/>
        <label>2</label>
    </ligand>
</feature>
<reference key="1">
    <citation type="journal article" date="2000" name="Nature">
        <title>Complete genome sequence of Pseudomonas aeruginosa PAO1, an opportunistic pathogen.</title>
        <authorList>
            <person name="Stover C.K."/>
            <person name="Pham X.-Q.T."/>
            <person name="Erwin A.L."/>
            <person name="Mizoguchi S.D."/>
            <person name="Warrener P."/>
            <person name="Hickey M.J."/>
            <person name="Brinkman F.S.L."/>
            <person name="Hufnagle W.O."/>
            <person name="Kowalik D.J."/>
            <person name="Lagrou M."/>
            <person name="Garber R.L."/>
            <person name="Goltry L."/>
            <person name="Tolentino E."/>
            <person name="Westbrock-Wadman S."/>
            <person name="Yuan Y."/>
            <person name="Brody L.L."/>
            <person name="Coulter S.N."/>
            <person name="Folger K.R."/>
            <person name="Kas A."/>
            <person name="Larbig K."/>
            <person name="Lim R.M."/>
            <person name="Smith K.A."/>
            <person name="Spencer D.H."/>
            <person name="Wong G.K.-S."/>
            <person name="Wu Z."/>
            <person name="Paulsen I.T."/>
            <person name="Reizer J."/>
            <person name="Saier M.H. Jr."/>
            <person name="Hancock R.E.W."/>
            <person name="Lory S."/>
            <person name="Olson M.V."/>
        </authorList>
    </citation>
    <scope>NUCLEOTIDE SEQUENCE [LARGE SCALE GENOMIC DNA]</scope>
    <source>
        <strain>ATCC 15692 / DSM 22644 / CIP 104116 / JCM 14847 / LMG 12228 / 1C / PRS 101 / PAO1</strain>
    </source>
</reference>
<sequence>MTDKEQVVIYTDGACKGNPGRGGWGALLLYKGAERELWGGEPDTTNNRMELMAAIQALAALKRSCPIRLITDSEYVMRGITEWLPNWKKRGWKTASKQPVKNADLWQALDEQVARHQVEWQWVRGHTGDPGNERADQLANRGVAELPR</sequence>
<organism>
    <name type="scientific">Pseudomonas aeruginosa (strain ATCC 15692 / DSM 22644 / CIP 104116 / JCM 14847 / LMG 12228 / 1C / PRS 101 / PAO1)</name>
    <dbReference type="NCBI Taxonomy" id="208964"/>
    <lineage>
        <taxon>Bacteria</taxon>
        <taxon>Pseudomonadati</taxon>
        <taxon>Pseudomonadota</taxon>
        <taxon>Gammaproteobacteria</taxon>
        <taxon>Pseudomonadales</taxon>
        <taxon>Pseudomonadaceae</taxon>
        <taxon>Pseudomonas</taxon>
    </lineage>
</organism>
<proteinExistence type="inferred from homology"/>
<comment type="function">
    <text evidence="1">Endonuclease that specifically degrades the RNA of RNA-DNA hybrids.</text>
</comment>
<comment type="catalytic activity">
    <reaction evidence="1">
        <text>Endonucleolytic cleavage to 5'-phosphomonoester.</text>
        <dbReference type="EC" id="3.1.26.4"/>
    </reaction>
</comment>
<comment type="cofactor">
    <cofactor evidence="1">
        <name>Mg(2+)</name>
        <dbReference type="ChEBI" id="CHEBI:18420"/>
    </cofactor>
    <text evidence="1">Binds 1 Mg(2+) ion per subunit. May bind a second metal ion at a regulatory site, or after substrate binding.</text>
</comment>
<comment type="subunit">
    <text evidence="1">Monomer.</text>
</comment>
<comment type="subcellular location">
    <subcellularLocation>
        <location evidence="1">Cytoplasm</location>
    </subcellularLocation>
</comment>
<comment type="similarity">
    <text evidence="1">Belongs to the RNase H family.</text>
</comment>
<protein>
    <recommendedName>
        <fullName evidence="1">Ribonuclease HI</fullName>
        <shortName evidence="1">RNase HI</shortName>
        <ecNumber evidence="1">3.1.26.4</ecNumber>
    </recommendedName>
</protein>